<organism>
    <name type="scientific">Shigella dysenteriae serotype 1 (strain Sd197)</name>
    <dbReference type="NCBI Taxonomy" id="300267"/>
    <lineage>
        <taxon>Bacteria</taxon>
        <taxon>Pseudomonadati</taxon>
        <taxon>Pseudomonadota</taxon>
        <taxon>Gammaproteobacteria</taxon>
        <taxon>Enterobacterales</taxon>
        <taxon>Enterobacteriaceae</taxon>
        <taxon>Shigella</taxon>
    </lineage>
</organism>
<feature type="chain" id="PRO_1000051431" description="Asparagine--tRNA ligase">
    <location>
        <begin position="1"/>
        <end position="466"/>
    </location>
</feature>
<dbReference type="EC" id="6.1.1.22" evidence="1"/>
<dbReference type="EMBL" id="CP000034">
    <property type="protein sequence ID" value="ABB62404.1"/>
    <property type="molecule type" value="Genomic_DNA"/>
</dbReference>
<dbReference type="RefSeq" id="WP_000117883.1">
    <property type="nucleotide sequence ID" value="NC_007606.1"/>
</dbReference>
<dbReference type="RefSeq" id="YP_403895.1">
    <property type="nucleotide sequence ID" value="NC_007606.1"/>
</dbReference>
<dbReference type="SMR" id="Q32E51"/>
<dbReference type="STRING" id="300267.SDY_2327"/>
<dbReference type="EnsemblBacteria" id="ABB62404">
    <property type="protein sequence ID" value="ABB62404"/>
    <property type="gene ID" value="SDY_2327"/>
</dbReference>
<dbReference type="KEGG" id="sdy:SDY_2327"/>
<dbReference type="PATRIC" id="fig|300267.13.peg.2809"/>
<dbReference type="HOGENOM" id="CLU_004553_2_0_6"/>
<dbReference type="Proteomes" id="UP000002716">
    <property type="component" value="Chromosome"/>
</dbReference>
<dbReference type="GO" id="GO:0005737">
    <property type="term" value="C:cytoplasm"/>
    <property type="evidence" value="ECO:0007669"/>
    <property type="project" value="UniProtKB-SubCell"/>
</dbReference>
<dbReference type="GO" id="GO:0004816">
    <property type="term" value="F:asparagine-tRNA ligase activity"/>
    <property type="evidence" value="ECO:0007669"/>
    <property type="project" value="UniProtKB-UniRule"/>
</dbReference>
<dbReference type="GO" id="GO:0005524">
    <property type="term" value="F:ATP binding"/>
    <property type="evidence" value="ECO:0007669"/>
    <property type="project" value="UniProtKB-UniRule"/>
</dbReference>
<dbReference type="GO" id="GO:0003676">
    <property type="term" value="F:nucleic acid binding"/>
    <property type="evidence" value="ECO:0007669"/>
    <property type="project" value="InterPro"/>
</dbReference>
<dbReference type="GO" id="GO:0006421">
    <property type="term" value="P:asparaginyl-tRNA aminoacylation"/>
    <property type="evidence" value="ECO:0007669"/>
    <property type="project" value="UniProtKB-UniRule"/>
</dbReference>
<dbReference type="CDD" id="cd00776">
    <property type="entry name" value="AsxRS_core"/>
    <property type="match status" value="1"/>
</dbReference>
<dbReference type="CDD" id="cd04318">
    <property type="entry name" value="EcAsnRS_like_N"/>
    <property type="match status" value="1"/>
</dbReference>
<dbReference type="FunFam" id="2.40.50.140:FF:000116">
    <property type="entry name" value="Asparagine--tRNA ligase"/>
    <property type="match status" value="1"/>
</dbReference>
<dbReference type="FunFam" id="3.30.930.10:FF:000016">
    <property type="entry name" value="Asparagine--tRNA ligase"/>
    <property type="match status" value="1"/>
</dbReference>
<dbReference type="Gene3D" id="3.30.930.10">
    <property type="entry name" value="Bira Bifunctional Protein, Domain 2"/>
    <property type="match status" value="1"/>
</dbReference>
<dbReference type="Gene3D" id="2.40.50.140">
    <property type="entry name" value="Nucleic acid-binding proteins"/>
    <property type="match status" value="1"/>
</dbReference>
<dbReference type="HAMAP" id="MF_00534">
    <property type="entry name" value="Asn_tRNA_synth"/>
    <property type="match status" value="1"/>
</dbReference>
<dbReference type="InterPro" id="IPR004364">
    <property type="entry name" value="Aa-tRNA-synt_II"/>
</dbReference>
<dbReference type="InterPro" id="IPR006195">
    <property type="entry name" value="aa-tRNA-synth_II"/>
</dbReference>
<dbReference type="InterPro" id="IPR045864">
    <property type="entry name" value="aa-tRNA-synth_II/BPL/LPL"/>
</dbReference>
<dbReference type="InterPro" id="IPR004522">
    <property type="entry name" value="Asn-tRNA-ligase"/>
</dbReference>
<dbReference type="InterPro" id="IPR002312">
    <property type="entry name" value="Asp/Asn-tRNA-synth_IIb"/>
</dbReference>
<dbReference type="InterPro" id="IPR012340">
    <property type="entry name" value="NA-bd_OB-fold"/>
</dbReference>
<dbReference type="InterPro" id="IPR004365">
    <property type="entry name" value="NA-bd_OB_tRNA"/>
</dbReference>
<dbReference type="NCBIfam" id="TIGR00457">
    <property type="entry name" value="asnS"/>
    <property type="match status" value="1"/>
</dbReference>
<dbReference type="NCBIfam" id="NF003037">
    <property type="entry name" value="PRK03932.1"/>
    <property type="match status" value="1"/>
</dbReference>
<dbReference type="PANTHER" id="PTHR22594:SF34">
    <property type="entry name" value="ASPARAGINE--TRNA LIGASE, MITOCHONDRIAL-RELATED"/>
    <property type="match status" value="1"/>
</dbReference>
<dbReference type="PANTHER" id="PTHR22594">
    <property type="entry name" value="ASPARTYL/LYSYL-TRNA SYNTHETASE"/>
    <property type="match status" value="1"/>
</dbReference>
<dbReference type="Pfam" id="PF00152">
    <property type="entry name" value="tRNA-synt_2"/>
    <property type="match status" value="1"/>
</dbReference>
<dbReference type="Pfam" id="PF01336">
    <property type="entry name" value="tRNA_anti-codon"/>
    <property type="match status" value="1"/>
</dbReference>
<dbReference type="PRINTS" id="PR01042">
    <property type="entry name" value="TRNASYNTHASP"/>
</dbReference>
<dbReference type="SUPFAM" id="SSF55681">
    <property type="entry name" value="Class II aaRS and biotin synthetases"/>
    <property type="match status" value="1"/>
</dbReference>
<dbReference type="SUPFAM" id="SSF50249">
    <property type="entry name" value="Nucleic acid-binding proteins"/>
    <property type="match status" value="1"/>
</dbReference>
<dbReference type="PROSITE" id="PS50862">
    <property type="entry name" value="AA_TRNA_LIGASE_II"/>
    <property type="match status" value="1"/>
</dbReference>
<reference key="1">
    <citation type="journal article" date="2005" name="Nucleic Acids Res.">
        <title>Genome dynamics and diversity of Shigella species, the etiologic agents of bacillary dysentery.</title>
        <authorList>
            <person name="Yang F."/>
            <person name="Yang J."/>
            <person name="Zhang X."/>
            <person name="Chen L."/>
            <person name="Jiang Y."/>
            <person name="Yan Y."/>
            <person name="Tang X."/>
            <person name="Wang J."/>
            <person name="Xiong Z."/>
            <person name="Dong J."/>
            <person name="Xue Y."/>
            <person name="Zhu Y."/>
            <person name="Xu X."/>
            <person name="Sun L."/>
            <person name="Chen S."/>
            <person name="Nie H."/>
            <person name="Peng J."/>
            <person name="Xu J."/>
            <person name="Wang Y."/>
            <person name="Yuan Z."/>
            <person name="Wen Y."/>
            <person name="Yao Z."/>
            <person name="Shen Y."/>
            <person name="Qiang B."/>
            <person name="Hou Y."/>
            <person name="Yu J."/>
            <person name="Jin Q."/>
        </authorList>
    </citation>
    <scope>NUCLEOTIDE SEQUENCE [LARGE SCALE GENOMIC DNA]</scope>
    <source>
        <strain>Sd197</strain>
    </source>
</reference>
<keyword id="KW-0030">Aminoacyl-tRNA synthetase</keyword>
<keyword id="KW-0067">ATP-binding</keyword>
<keyword id="KW-0963">Cytoplasm</keyword>
<keyword id="KW-0436">Ligase</keyword>
<keyword id="KW-0547">Nucleotide-binding</keyword>
<keyword id="KW-0648">Protein biosynthesis</keyword>
<keyword id="KW-1185">Reference proteome</keyword>
<proteinExistence type="inferred from homology"/>
<evidence type="ECO:0000255" key="1">
    <source>
        <dbReference type="HAMAP-Rule" id="MF_00534"/>
    </source>
</evidence>
<comment type="catalytic activity">
    <reaction evidence="1">
        <text>tRNA(Asn) + L-asparagine + ATP = L-asparaginyl-tRNA(Asn) + AMP + diphosphate + H(+)</text>
        <dbReference type="Rhea" id="RHEA:11180"/>
        <dbReference type="Rhea" id="RHEA-COMP:9659"/>
        <dbReference type="Rhea" id="RHEA-COMP:9674"/>
        <dbReference type="ChEBI" id="CHEBI:15378"/>
        <dbReference type="ChEBI" id="CHEBI:30616"/>
        <dbReference type="ChEBI" id="CHEBI:33019"/>
        <dbReference type="ChEBI" id="CHEBI:58048"/>
        <dbReference type="ChEBI" id="CHEBI:78442"/>
        <dbReference type="ChEBI" id="CHEBI:78515"/>
        <dbReference type="ChEBI" id="CHEBI:456215"/>
        <dbReference type="EC" id="6.1.1.22"/>
    </reaction>
</comment>
<comment type="subunit">
    <text evidence="1">Homodimer.</text>
</comment>
<comment type="subcellular location">
    <subcellularLocation>
        <location evidence="1">Cytoplasm</location>
    </subcellularLocation>
</comment>
<comment type="similarity">
    <text evidence="1">Belongs to the class-II aminoacyl-tRNA synthetase family.</text>
</comment>
<accession>Q32E51</accession>
<sequence length="466" mass="52540">MSVVPVADVLQGRVAVDSEVTVRGWVRTRRDSKAGISFLAVYDGSCFDPVQAVINNSLPNYNEDVLRLTTGCSVIVTGKVVASPGQGQQFEIQASKVEVAGWVEDPDTYPMAAKRHSIEYLREVAHLRPRTNLIGAVARVRHTLAQALHRFFNEQGFFWVSTPLITASDTEGAGEMFRVSTLDLENLPRNDQGKVDFDKDFFGKESFLTVSGQLNGETYACALSKIYTFGPTFRAENSNTSRHLAEFWMLEPEVAFANLNDIAGLAEAMLKYVFKAVLEERADDMKFFAERVDKDAVSRLERFIEADFAQVDYTDAVTILENCGRKFENPVYWGVDLSSEHERYLAEEHFKAPVVVKNYPKDIKAFYMRLNEDGKTVAAMDVLAPGIGEIIGGSQREERLDVLDVRMLEMGLNKEDYWWYRDLRRYGTVPHSGFGLGFERLIAYVTGVQNVRDVIPFPRTPRNASF</sequence>
<protein>
    <recommendedName>
        <fullName evidence="1">Asparagine--tRNA ligase</fullName>
        <ecNumber evidence="1">6.1.1.22</ecNumber>
    </recommendedName>
    <alternativeName>
        <fullName evidence="1">Asparaginyl-tRNA synthetase</fullName>
        <shortName evidence="1">AsnRS</shortName>
    </alternativeName>
</protein>
<name>SYN_SHIDS</name>
<gene>
    <name evidence="1" type="primary">asnS</name>
    <name type="ordered locus">SDY_2327</name>
</gene>